<proteinExistence type="inferred from homology"/>
<accession>Q899C3</accession>
<name>SYI_CLOTE</name>
<keyword id="KW-0030">Aminoacyl-tRNA synthetase</keyword>
<keyword id="KW-0067">ATP-binding</keyword>
<keyword id="KW-0963">Cytoplasm</keyword>
<keyword id="KW-0436">Ligase</keyword>
<keyword id="KW-0479">Metal-binding</keyword>
<keyword id="KW-0547">Nucleotide-binding</keyword>
<keyword id="KW-0648">Protein biosynthesis</keyword>
<keyword id="KW-1185">Reference proteome</keyword>
<keyword id="KW-0862">Zinc</keyword>
<gene>
    <name evidence="1" type="primary">ileS</name>
    <name type="ordered locus">CTC_00261</name>
</gene>
<dbReference type="EC" id="6.1.1.5" evidence="1"/>
<dbReference type="EMBL" id="AE015927">
    <property type="protein sequence ID" value="AAO34906.1"/>
    <property type="molecule type" value="Genomic_DNA"/>
</dbReference>
<dbReference type="RefSeq" id="WP_035110918.1">
    <property type="nucleotide sequence ID" value="NC_004557.1"/>
</dbReference>
<dbReference type="SMR" id="Q899C3"/>
<dbReference type="STRING" id="212717.CTC_00261"/>
<dbReference type="GeneID" id="24253432"/>
<dbReference type="KEGG" id="ctc:CTC_00261"/>
<dbReference type="HOGENOM" id="CLU_001493_1_1_9"/>
<dbReference type="OrthoDB" id="9810365at2"/>
<dbReference type="Proteomes" id="UP000001412">
    <property type="component" value="Chromosome"/>
</dbReference>
<dbReference type="GO" id="GO:0005737">
    <property type="term" value="C:cytoplasm"/>
    <property type="evidence" value="ECO:0007669"/>
    <property type="project" value="UniProtKB-SubCell"/>
</dbReference>
<dbReference type="GO" id="GO:0002161">
    <property type="term" value="F:aminoacyl-tRNA deacylase activity"/>
    <property type="evidence" value="ECO:0007669"/>
    <property type="project" value="InterPro"/>
</dbReference>
<dbReference type="GO" id="GO:0005524">
    <property type="term" value="F:ATP binding"/>
    <property type="evidence" value="ECO:0007669"/>
    <property type="project" value="UniProtKB-UniRule"/>
</dbReference>
<dbReference type="GO" id="GO:0004822">
    <property type="term" value="F:isoleucine-tRNA ligase activity"/>
    <property type="evidence" value="ECO:0007669"/>
    <property type="project" value="UniProtKB-UniRule"/>
</dbReference>
<dbReference type="GO" id="GO:0000049">
    <property type="term" value="F:tRNA binding"/>
    <property type="evidence" value="ECO:0007669"/>
    <property type="project" value="InterPro"/>
</dbReference>
<dbReference type="GO" id="GO:0008270">
    <property type="term" value="F:zinc ion binding"/>
    <property type="evidence" value="ECO:0007669"/>
    <property type="project" value="UniProtKB-UniRule"/>
</dbReference>
<dbReference type="GO" id="GO:0006428">
    <property type="term" value="P:isoleucyl-tRNA aminoacylation"/>
    <property type="evidence" value="ECO:0007669"/>
    <property type="project" value="UniProtKB-UniRule"/>
</dbReference>
<dbReference type="CDD" id="cd07961">
    <property type="entry name" value="Anticodon_Ia_Ile_ABEc"/>
    <property type="match status" value="1"/>
</dbReference>
<dbReference type="CDD" id="cd00818">
    <property type="entry name" value="IleRS_core"/>
    <property type="match status" value="1"/>
</dbReference>
<dbReference type="FunFam" id="1.10.730.10:FF:000038">
    <property type="entry name" value="Isoleucine--tRNA ligase"/>
    <property type="match status" value="1"/>
</dbReference>
<dbReference type="FunFam" id="3.40.50.620:FF:000063">
    <property type="entry name" value="Isoleucine--tRNA ligase"/>
    <property type="match status" value="1"/>
</dbReference>
<dbReference type="FunFam" id="3.40.50.620:FF:000075">
    <property type="entry name" value="Isoleucine--tRNA ligase"/>
    <property type="match status" value="1"/>
</dbReference>
<dbReference type="Gene3D" id="3.40.50.620">
    <property type="entry name" value="HUPs"/>
    <property type="match status" value="2"/>
</dbReference>
<dbReference type="Gene3D" id="1.10.730.10">
    <property type="entry name" value="Isoleucyl-tRNA Synthetase, Domain 1"/>
    <property type="match status" value="1"/>
</dbReference>
<dbReference type="HAMAP" id="MF_02003">
    <property type="entry name" value="Ile_tRNA_synth_type2"/>
    <property type="match status" value="1"/>
</dbReference>
<dbReference type="InterPro" id="IPR001412">
    <property type="entry name" value="aa-tRNA-synth_I_CS"/>
</dbReference>
<dbReference type="InterPro" id="IPR002300">
    <property type="entry name" value="aa-tRNA-synth_Ia"/>
</dbReference>
<dbReference type="InterPro" id="IPR033709">
    <property type="entry name" value="Anticodon_Ile_ABEc"/>
</dbReference>
<dbReference type="InterPro" id="IPR002301">
    <property type="entry name" value="Ile-tRNA-ligase"/>
</dbReference>
<dbReference type="InterPro" id="IPR023586">
    <property type="entry name" value="Ile-tRNA-ligase_type2"/>
</dbReference>
<dbReference type="InterPro" id="IPR013155">
    <property type="entry name" value="M/V/L/I-tRNA-synth_anticd-bd"/>
</dbReference>
<dbReference type="InterPro" id="IPR014729">
    <property type="entry name" value="Rossmann-like_a/b/a_fold"/>
</dbReference>
<dbReference type="InterPro" id="IPR009080">
    <property type="entry name" value="tRNAsynth_Ia_anticodon-bd"/>
</dbReference>
<dbReference type="InterPro" id="IPR009008">
    <property type="entry name" value="Val/Leu/Ile-tRNA-synth_edit"/>
</dbReference>
<dbReference type="NCBIfam" id="TIGR00392">
    <property type="entry name" value="ileS"/>
    <property type="match status" value="1"/>
</dbReference>
<dbReference type="PANTHER" id="PTHR42780:SF1">
    <property type="entry name" value="ISOLEUCINE--TRNA LIGASE, CYTOPLASMIC"/>
    <property type="match status" value="1"/>
</dbReference>
<dbReference type="PANTHER" id="PTHR42780">
    <property type="entry name" value="SOLEUCYL-TRNA SYNTHETASE"/>
    <property type="match status" value="1"/>
</dbReference>
<dbReference type="Pfam" id="PF08264">
    <property type="entry name" value="Anticodon_1"/>
    <property type="match status" value="1"/>
</dbReference>
<dbReference type="Pfam" id="PF19302">
    <property type="entry name" value="DUF5915"/>
    <property type="match status" value="1"/>
</dbReference>
<dbReference type="Pfam" id="PF00133">
    <property type="entry name" value="tRNA-synt_1"/>
    <property type="match status" value="1"/>
</dbReference>
<dbReference type="PRINTS" id="PR00984">
    <property type="entry name" value="TRNASYNTHILE"/>
</dbReference>
<dbReference type="SUPFAM" id="SSF47323">
    <property type="entry name" value="Anticodon-binding domain of a subclass of class I aminoacyl-tRNA synthetases"/>
    <property type="match status" value="2"/>
</dbReference>
<dbReference type="SUPFAM" id="SSF52374">
    <property type="entry name" value="Nucleotidylyl transferase"/>
    <property type="match status" value="1"/>
</dbReference>
<dbReference type="SUPFAM" id="SSF50677">
    <property type="entry name" value="ValRS/IleRS/LeuRS editing domain"/>
    <property type="match status" value="1"/>
</dbReference>
<dbReference type="PROSITE" id="PS00178">
    <property type="entry name" value="AA_TRNA_LIGASE_I"/>
    <property type="match status" value="1"/>
</dbReference>
<organism>
    <name type="scientific">Clostridium tetani (strain Massachusetts / E88)</name>
    <dbReference type="NCBI Taxonomy" id="212717"/>
    <lineage>
        <taxon>Bacteria</taxon>
        <taxon>Bacillati</taxon>
        <taxon>Bacillota</taxon>
        <taxon>Clostridia</taxon>
        <taxon>Eubacteriales</taxon>
        <taxon>Clostridiaceae</taxon>
        <taxon>Clostridium</taxon>
    </lineage>
</organism>
<reference key="1">
    <citation type="journal article" date="2003" name="Proc. Natl. Acad. Sci. U.S.A.">
        <title>The genome sequence of Clostridium tetani, the causative agent of tetanus disease.</title>
        <authorList>
            <person name="Brueggemann H."/>
            <person name="Baeumer S."/>
            <person name="Fricke W.F."/>
            <person name="Wiezer A."/>
            <person name="Liesegang H."/>
            <person name="Decker I."/>
            <person name="Herzberg C."/>
            <person name="Martinez-Arias R."/>
            <person name="Merkl R."/>
            <person name="Henne A."/>
            <person name="Gottschalk G."/>
        </authorList>
    </citation>
    <scope>NUCLEOTIDE SEQUENCE [LARGE SCALE GENOMIC DNA]</scope>
    <source>
        <strain>Massachusetts / E88</strain>
    </source>
</reference>
<evidence type="ECO:0000255" key="1">
    <source>
        <dbReference type="HAMAP-Rule" id="MF_02003"/>
    </source>
</evidence>
<feature type="chain" id="PRO_0000098535" description="Isoleucine--tRNA ligase">
    <location>
        <begin position="1"/>
        <end position="1036"/>
    </location>
</feature>
<feature type="short sequence motif" description="'HIGH' region">
    <location>
        <begin position="48"/>
        <end position="58"/>
    </location>
</feature>
<feature type="short sequence motif" description="'KMSKS' region">
    <location>
        <begin position="590"/>
        <end position="594"/>
    </location>
</feature>
<feature type="binding site" evidence="1">
    <location>
        <position position="593"/>
    </location>
    <ligand>
        <name>ATP</name>
        <dbReference type="ChEBI" id="CHEBI:30616"/>
    </ligand>
</feature>
<comment type="function">
    <text evidence="1">Catalyzes the attachment of isoleucine to tRNA(Ile). As IleRS can inadvertently accommodate and process structurally similar amino acids such as valine, to avoid such errors it has two additional distinct tRNA(Ile)-dependent editing activities. One activity is designated as 'pretransfer' editing and involves the hydrolysis of activated Val-AMP. The other activity is designated 'posttransfer' editing and involves deacylation of mischarged Val-tRNA(Ile).</text>
</comment>
<comment type="catalytic activity">
    <reaction evidence="1">
        <text>tRNA(Ile) + L-isoleucine + ATP = L-isoleucyl-tRNA(Ile) + AMP + diphosphate</text>
        <dbReference type="Rhea" id="RHEA:11060"/>
        <dbReference type="Rhea" id="RHEA-COMP:9666"/>
        <dbReference type="Rhea" id="RHEA-COMP:9695"/>
        <dbReference type="ChEBI" id="CHEBI:30616"/>
        <dbReference type="ChEBI" id="CHEBI:33019"/>
        <dbReference type="ChEBI" id="CHEBI:58045"/>
        <dbReference type="ChEBI" id="CHEBI:78442"/>
        <dbReference type="ChEBI" id="CHEBI:78528"/>
        <dbReference type="ChEBI" id="CHEBI:456215"/>
        <dbReference type="EC" id="6.1.1.5"/>
    </reaction>
</comment>
<comment type="cofactor">
    <cofactor evidence="1">
        <name>Zn(2+)</name>
        <dbReference type="ChEBI" id="CHEBI:29105"/>
    </cofactor>
</comment>
<comment type="subunit">
    <text evidence="1">Monomer.</text>
</comment>
<comment type="subcellular location">
    <subcellularLocation>
        <location evidence="1">Cytoplasm</location>
    </subcellularLocation>
</comment>
<comment type="domain">
    <text evidence="1">IleRS has two distinct active sites: one for aminoacylation and one for editing. The misactivated valine is translocated from the active site to the editing site, which sterically excludes the correctly activated isoleucine. The single editing site contains two valyl binding pockets, one specific for each substrate (Val-AMP or Val-tRNA(Ile)).</text>
</comment>
<comment type="similarity">
    <text evidence="1">Belongs to the class-I aminoacyl-tRNA synthetase family. IleS type 2 subfamily.</text>
</comment>
<protein>
    <recommendedName>
        <fullName evidence="1">Isoleucine--tRNA ligase</fullName>
        <ecNumber evidence="1">6.1.1.5</ecNumber>
    </recommendedName>
    <alternativeName>
        <fullName evidence="1">Isoleucyl-tRNA synthetase</fullName>
        <shortName evidence="1">IleRS</shortName>
    </alternativeName>
</protein>
<sequence>MYKKIDGSKSFVQMEREVLDFWNKNNIVDKSFALNEEGEYFTFYDGPPTANGKPHVGHVLTRVIKDLIPRYKVMKGYKVLRKAGWDTHGLPVELEIEKKLGISGKEEIEKFGVEEFIKECKDSVFTYSSMWKDMSEKLAFWVDMENPYVTYHNDYIESVWWALKQLWNKELLYKGHKVIPYCPRCGTALSSHEVAQGYKDVKEATAFVKFKVKGEENKYILAWTTTPWTLPSNVALAINKNFDYVEVKNNDEVLILAKELVDSVIDGEYEIIKEFKGEDILGLQYEQLLPFYTPEEEAFRVIHGDFVTLSDGTGIVHTAPAYGEDDNIVCKKHGLPMINLVDKEGKFIDCVEPWKGMPVKKADSKIIEYMDEKGILYKSEKFTHSYPHCWRCDTALLYYPTDSWFVRMTSLRDKLLENNNKVNWYPDNIRTGRFGKFLENVIDWGISRDRYWGTPLPIWECECGHRECIGSISELKEKGIDVPEDIELHKPYIDKVKLKCSKCGKEMKRTREVIDCWFDSGSMPFAQHHYPFENKEVFEKTFPAQFISEAVDQTRGWFYTLTAISTAIFDTNPFENCIVLGHVLDKHGLKMSKSKGNVVDPFDVLDSAGADASRWHFYTASAPWLPTRFSPEDVEETQRKFLSTLWNVYSFYVLYADIDKFNPLEYKDFVSENVMDKWIVSKLNSLIKDVEDHMDSYRITQAALAIEDFVDELSNWYVRRNRSRFWSEELREDKIGAYVTLYKVLTTVSLIAAPFVPFITEEIYNNLVRGLDKNALESIHLCNWPKYDENLIQKELEREMDEAYKIVKLGRSARNSVNIKNRQPLSSMLVSIKTLPEYYGRIIKDELNIKDIIFGADLSSYVEFNIKPNLPVLGKAYGRYIPQIRKEITSMDQMKLAQKIKQGEKVIINIDGNEIELNEENLLVTMKGLEGFAFAGEGNIGVVLNTTITDELKEEGQLREILSKIQNMRKEKEFEVADRIKLYVSGNRMLESVVEKFEDIIRKETIAEEVIYNEEREYVDCKINGEDFKIEVEAIK</sequence>